<name>PILR1_LINCY</name>
<gene>
    <name type="primary">PLR_Lc1</name>
</gene>
<keyword id="KW-0521">NADP</keyword>
<keyword id="KW-0560">Oxidoreductase</keyword>
<sequence>MGSLNESSKVLVIGGTGYLGKRLVKASLDAGHDTYVMHRPEIGVDIEKVQLLLSFKMQGAHLVSASFDDHRSLVDAVSLVDVVICAISGVHIRSHQILLQLKLVQAIKEAGNVKRFLPSEFGTDPARMGDAMEPGRVTFDDKMVVRRAIEEAAIPFTYVSANCFAGYFLGGLCQPGSILPSRDHVTLLGDGNQKGVYVDENDIAAYTLKAIDDPRTLNKTLYIKPPKNILSQRQVVGIWEKHIGKQLHKTLLSEQDFLAAMKEQDYAEQVGLTHYYHVCYEGCLTNFEVEQDQEASKLYPDVRYTTVEEYLKRYV</sequence>
<protein>
    <recommendedName>
        <fullName>Bifunctional pinoresinol-lariciresinol reductase</fullName>
        <shortName>PLR-Lc1</shortName>
    </recommendedName>
    <alternativeName>
        <fullName>(+)-lariciresinol reductase</fullName>
        <ecNumber>1.23.1.2</ecNumber>
    </alternativeName>
    <alternativeName>
        <fullName>(+)-pinoresinol reductase</fullName>
        <ecNumber>1.23.1.1</ecNumber>
    </alternativeName>
</protein>
<dbReference type="EC" id="1.23.1.2"/>
<dbReference type="EC" id="1.23.1.1"/>
<dbReference type="EMBL" id="EU107358">
    <property type="protein sequence ID" value="ABW86959.1"/>
    <property type="molecule type" value="mRNA"/>
</dbReference>
<dbReference type="SMR" id="B5KRH5"/>
<dbReference type="KEGG" id="ag:ABW86959"/>
<dbReference type="BRENDA" id="1.23.1.1">
    <property type="organism ID" value="13209"/>
</dbReference>
<dbReference type="BRENDA" id="1.23.1.2">
    <property type="organism ID" value="13209"/>
</dbReference>
<dbReference type="GO" id="GO:0010284">
    <property type="term" value="F:lariciresinol reductase activity"/>
    <property type="evidence" value="ECO:0000314"/>
    <property type="project" value="UniProtKB"/>
</dbReference>
<dbReference type="GO" id="GO:0010283">
    <property type="term" value="F:pinoresinol reductase activity"/>
    <property type="evidence" value="ECO:0000314"/>
    <property type="project" value="UniProtKB"/>
</dbReference>
<dbReference type="GO" id="GO:1902132">
    <property type="term" value="P:(+)-lariciresinol biosynthetic process"/>
    <property type="evidence" value="ECO:0000314"/>
    <property type="project" value="UniProtKB"/>
</dbReference>
<dbReference type="GO" id="GO:1902131">
    <property type="term" value="P:(+)-lariciresinol catabolic process"/>
    <property type="evidence" value="ECO:0000314"/>
    <property type="project" value="UniProtKB"/>
</dbReference>
<dbReference type="GO" id="GO:1902125">
    <property type="term" value="P:(+)-pinoresinol catabolic process"/>
    <property type="evidence" value="ECO:0000314"/>
    <property type="project" value="UniProtKB"/>
</dbReference>
<dbReference type="GO" id="GO:1902138">
    <property type="term" value="P:(-)-secoisolariciresinol biosynthetic process"/>
    <property type="evidence" value="ECO:0000314"/>
    <property type="project" value="UniProtKB"/>
</dbReference>
<dbReference type="GO" id="GO:0009807">
    <property type="term" value="P:lignan biosynthetic process"/>
    <property type="evidence" value="ECO:0000314"/>
    <property type="project" value="UniProtKB"/>
</dbReference>
<dbReference type="CDD" id="cd05259">
    <property type="entry name" value="PCBER_SDR_a"/>
    <property type="match status" value="1"/>
</dbReference>
<dbReference type="Gene3D" id="3.40.50.720">
    <property type="entry name" value="NAD(P)-binding Rossmann-like Domain"/>
    <property type="match status" value="1"/>
</dbReference>
<dbReference type="Gene3D" id="3.90.25.10">
    <property type="entry name" value="UDP-galactose 4-epimerase, domain 1"/>
    <property type="match status" value="1"/>
</dbReference>
<dbReference type="InterPro" id="IPR036291">
    <property type="entry name" value="NAD(P)-bd_dom_sf"/>
</dbReference>
<dbReference type="InterPro" id="IPR008030">
    <property type="entry name" value="NmrA-like"/>
</dbReference>
<dbReference type="InterPro" id="IPR050608">
    <property type="entry name" value="NmrA-type/Isoflavone_red_sf"/>
</dbReference>
<dbReference type="InterPro" id="IPR045312">
    <property type="entry name" value="PCBER-like"/>
</dbReference>
<dbReference type="PANTHER" id="PTHR43349:SF47">
    <property type="entry name" value="NMRA-LIKE DOMAIN-CONTAINING PROTEIN"/>
    <property type="match status" value="1"/>
</dbReference>
<dbReference type="PANTHER" id="PTHR43349">
    <property type="entry name" value="PINORESINOL REDUCTASE-RELATED"/>
    <property type="match status" value="1"/>
</dbReference>
<dbReference type="Pfam" id="PF05368">
    <property type="entry name" value="NmrA"/>
    <property type="match status" value="1"/>
</dbReference>
<dbReference type="SUPFAM" id="SSF51735">
    <property type="entry name" value="NAD(P)-binding Rossmann-fold domains"/>
    <property type="match status" value="1"/>
</dbReference>
<comment type="function">
    <text evidence="3">Reductase involved in lignan (-)-hinokinin biosynthesis. Catalyzes the enantioselective conversion of (+)-pinoresinol into (+)-lariciresinol and of (+)-lariciresinol into (-)-secoisolariciresinol. Abstracts the 4R-hydride from the NADPH cofactor during catalysis. Has also a low phenylcoumaran benzylic ether reductase activity.</text>
</comment>
<comment type="catalytic activity">
    <reaction evidence="3">
        <text>(+)-lariciresinol + NADP(+) = (+)-pinoresinol + NADPH + H(+)</text>
        <dbReference type="Rhea" id="RHEA:34419"/>
        <dbReference type="ChEBI" id="CHEBI:40"/>
        <dbReference type="ChEBI" id="CHEBI:15378"/>
        <dbReference type="ChEBI" id="CHEBI:57783"/>
        <dbReference type="ChEBI" id="CHEBI:58349"/>
        <dbReference type="ChEBI" id="CHEBI:67246"/>
        <dbReference type="EC" id="1.23.1.1"/>
    </reaction>
</comment>
<comment type="catalytic activity">
    <reaction evidence="3">
        <text>(-)-secoisolariciresinol + NADP(+) = (+)-lariciresinol + NADPH + H(+)</text>
        <dbReference type="Rhea" id="RHEA:34423"/>
        <dbReference type="ChEBI" id="CHEBI:15378"/>
        <dbReference type="ChEBI" id="CHEBI:57783"/>
        <dbReference type="ChEBI" id="CHEBI:58349"/>
        <dbReference type="ChEBI" id="CHEBI:65004"/>
        <dbReference type="ChEBI" id="CHEBI:67246"/>
        <dbReference type="EC" id="1.23.1.2"/>
    </reaction>
</comment>
<comment type="subunit">
    <text evidence="1">Dimer.</text>
</comment>
<comment type="miscellaneous">
    <text evidence="5">Knock-down mutants of PLR_Lc1 show unequivocally that (-)-hinokinin is synthesized via the (-)-secoisolariciresinol/(-)-matairesinol pathway and not via the piperitol/sesamin pathway.</text>
</comment>
<comment type="similarity">
    <text evidence="4">Belongs to the NmrA-type oxidoreductase family. Isoflavone reductase subfamily.</text>
</comment>
<reference key="1">
    <citation type="journal article" date="2008" name="Plant J.">
        <title>Hinokinin biosynthesis in Linum corymbulosum Reichenb.</title>
        <authorList>
            <person name="Bayindir U."/>
            <person name="Alfermann A.W."/>
            <person name="Fuss E."/>
        </authorList>
    </citation>
    <scope>NUCLEOTIDE SEQUENCE [MRNA]</scope>
    <scope>FUNCTION</scope>
    <scope>CATALYTIC ACTIVITY</scope>
</reference>
<feature type="initiator methionine" description="Removed" evidence="1">
    <location>
        <position position="1"/>
    </location>
</feature>
<feature type="chain" id="PRO_0000422940" description="Bifunctional pinoresinol-lariciresinol reductase">
    <location>
        <begin position="2"/>
        <end position="315"/>
    </location>
</feature>
<feature type="active site" description="Proton acceptor" evidence="2">
    <location>
        <position position="142"/>
    </location>
</feature>
<feature type="binding site" evidence="2">
    <location>
        <begin position="14"/>
        <end position="20"/>
    </location>
    <ligand>
        <name>NADP(+)</name>
        <dbReference type="ChEBI" id="CHEBI:58349"/>
    </ligand>
</feature>
<feature type="binding site" evidence="2">
    <location>
        <position position="39"/>
    </location>
    <ligand>
        <name>NADP(+)</name>
        <dbReference type="ChEBI" id="CHEBI:58349"/>
    </ligand>
</feature>
<feature type="binding site" evidence="2">
    <location>
        <position position="48"/>
    </location>
    <ligand>
        <name>NADP(+)</name>
        <dbReference type="ChEBI" id="CHEBI:58349"/>
    </ligand>
</feature>
<feature type="binding site" evidence="2">
    <location>
        <position position="146"/>
    </location>
    <ligand>
        <name>NADP(+)</name>
        <dbReference type="ChEBI" id="CHEBI:58349"/>
    </ligand>
</feature>
<feature type="binding site" evidence="2">
    <location>
        <position position="274"/>
    </location>
    <ligand>
        <name>substrate</name>
    </ligand>
</feature>
<proteinExistence type="evidence at protein level"/>
<organism>
    <name type="scientific">Linum corymbulosum</name>
    <name type="common">Linum</name>
    <name type="synonym">Linum strictum subsp. corymbulosum</name>
    <dbReference type="NCBI Taxonomy" id="480358"/>
    <lineage>
        <taxon>Eukaryota</taxon>
        <taxon>Viridiplantae</taxon>
        <taxon>Streptophyta</taxon>
        <taxon>Embryophyta</taxon>
        <taxon>Tracheophyta</taxon>
        <taxon>Spermatophyta</taxon>
        <taxon>Magnoliopsida</taxon>
        <taxon>eudicotyledons</taxon>
        <taxon>Gunneridae</taxon>
        <taxon>Pentapetalae</taxon>
        <taxon>rosids</taxon>
        <taxon>fabids</taxon>
        <taxon>Malpighiales</taxon>
        <taxon>Linaceae</taxon>
        <taxon>Linum</taxon>
    </lineage>
</organism>
<accession>B5KRH5</accession>
<evidence type="ECO:0000250" key="1"/>
<evidence type="ECO:0000250" key="2">
    <source>
        <dbReference type="UniProtKB" id="Q9LD14"/>
    </source>
</evidence>
<evidence type="ECO:0000269" key="3">
    <source>
    </source>
</evidence>
<evidence type="ECO:0000305" key="4"/>
<evidence type="ECO:0000305" key="5">
    <source>
    </source>
</evidence>